<reference key="1">
    <citation type="submission" date="2008-02" db="EMBL/GenBank/DDBJ databases">
        <title>Complete sequence of Pseudomonas putida W619.</title>
        <authorList>
            <person name="Copeland A."/>
            <person name="Lucas S."/>
            <person name="Lapidus A."/>
            <person name="Barry K."/>
            <person name="Detter J.C."/>
            <person name="Glavina del Rio T."/>
            <person name="Dalin E."/>
            <person name="Tice H."/>
            <person name="Pitluck S."/>
            <person name="Chain P."/>
            <person name="Malfatti S."/>
            <person name="Shin M."/>
            <person name="Vergez L."/>
            <person name="Schmutz J."/>
            <person name="Larimer F."/>
            <person name="Land M."/>
            <person name="Hauser L."/>
            <person name="Kyrpides N."/>
            <person name="Kim E."/>
            <person name="Taghavi S."/>
            <person name="Vangronsveld D."/>
            <person name="van der Lelie D."/>
            <person name="Richardson P."/>
        </authorList>
    </citation>
    <scope>NUCLEOTIDE SEQUENCE [LARGE SCALE GENOMIC DNA]</scope>
    <source>
        <strain>W619</strain>
    </source>
</reference>
<organism>
    <name type="scientific">Pseudomonas putida (strain W619)</name>
    <dbReference type="NCBI Taxonomy" id="390235"/>
    <lineage>
        <taxon>Bacteria</taxon>
        <taxon>Pseudomonadati</taxon>
        <taxon>Pseudomonadota</taxon>
        <taxon>Gammaproteobacteria</taxon>
        <taxon>Pseudomonadales</taxon>
        <taxon>Pseudomonadaceae</taxon>
        <taxon>Pseudomonas</taxon>
    </lineage>
</organism>
<feature type="chain" id="PRO_1000186326" description="Pyridoxine/pyridoxamine 5'-phosphate oxidase">
    <location>
        <begin position="1"/>
        <end position="215"/>
    </location>
</feature>
<feature type="binding site" evidence="1">
    <location>
        <begin position="9"/>
        <end position="12"/>
    </location>
    <ligand>
        <name>substrate</name>
    </ligand>
</feature>
<feature type="binding site" evidence="1">
    <location>
        <begin position="64"/>
        <end position="69"/>
    </location>
    <ligand>
        <name>FMN</name>
        <dbReference type="ChEBI" id="CHEBI:58210"/>
    </ligand>
</feature>
<feature type="binding site" evidence="1">
    <location>
        <position position="69"/>
    </location>
    <ligand>
        <name>substrate</name>
    </ligand>
</feature>
<feature type="binding site" evidence="1">
    <location>
        <begin position="79"/>
        <end position="80"/>
    </location>
    <ligand>
        <name>FMN</name>
        <dbReference type="ChEBI" id="CHEBI:58210"/>
    </ligand>
</feature>
<feature type="binding site" evidence="1">
    <location>
        <position position="86"/>
    </location>
    <ligand>
        <name>FMN</name>
        <dbReference type="ChEBI" id="CHEBI:58210"/>
    </ligand>
</feature>
<feature type="binding site" evidence="1">
    <location>
        <position position="108"/>
    </location>
    <ligand>
        <name>FMN</name>
        <dbReference type="ChEBI" id="CHEBI:58210"/>
    </ligand>
</feature>
<feature type="binding site" evidence="1">
    <location>
        <position position="126"/>
    </location>
    <ligand>
        <name>substrate</name>
    </ligand>
</feature>
<feature type="binding site" evidence="1">
    <location>
        <position position="130"/>
    </location>
    <ligand>
        <name>substrate</name>
    </ligand>
</feature>
<feature type="binding site" evidence="1">
    <location>
        <position position="134"/>
    </location>
    <ligand>
        <name>substrate</name>
    </ligand>
</feature>
<feature type="binding site" evidence="1">
    <location>
        <begin position="143"/>
        <end position="144"/>
    </location>
    <ligand>
        <name>FMN</name>
        <dbReference type="ChEBI" id="CHEBI:58210"/>
    </ligand>
</feature>
<feature type="binding site" evidence="1">
    <location>
        <position position="188"/>
    </location>
    <ligand>
        <name>FMN</name>
        <dbReference type="ChEBI" id="CHEBI:58210"/>
    </ligand>
</feature>
<feature type="binding site" evidence="1">
    <location>
        <begin position="194"/>
        <end position="196"/>
    </location>
    <ligand>
        <name>substrate</name>
    </ligand>
</feature>
<feature type="binding site" evidence="1">
    <location>
        <position position="198"/>
    </location>
    <ligand>
        <name>FMN</name>
        <dbReference type="ChEBI" id="CHEBI:58210"/>
    </ligand>
</feature>
<dbReference type="EC" id="1.4.3.5" evidence="1"/>
<dbReference type="EMBL" id="CP000949">
    <property type="protein sequence ID" value="ACA71655.1"/>
    <property type="molecule type" value="Genomic_DNA"/>
</dbReference>
<dbReference type="SMR" id="B1J1C4"/>
<dbReference type="STRING" id="390235.PputW619_1150"/>
<dbReference type="KEGG" id="ppw:PputW619_1150"/>
<dbReference type="eggNOG" id="COG0259">
    <property type="taxonomic scope" value="Bacteria"/>
</dbReference>
<dbReference type="HOGENOM" id="CLU_032263_2_2_6"/>
<dbReference type="OrthoDB" id="9780392at2"/>
<dbReference type="UniPathway" id="UPA01068">
    <property type="reaction ID" value="UER00304"/>
</dbReference>
<dbReference type="UniPathway" id="UPA01068">
    <property type="reaction ID" value="UER00305"/>
</dbReference>
<dbReference type="GO" id="GO:0010181">
    <property type="term" value="F:FMN binding"/>
    <property type="evidence" value="ECO:0007669"/>
    <property type="project" value="UniProtKB-UniRule"/>
</dbReference>
<dbReference type="GO" id="GO:0004733">
    <property type="term" value="F:pyridoxamine phosphate oxidase activity"/>
    <property type="evidence" value="ECO:0007669"/>
    <property type="project" value="UniProtKB-UniRule"/>
</dbReference>
<dbReference type="GO" id="GO:0008615">
    <property type="term" value="P:pyridoxine biosynthetic process"/>
    <property type="evidence" value="ECO:0007669"/>
    <property type="project" value="UniProtKB-KW"/>
</dbReference>
<dbReference type="FunFam" id="2.30.110.10:FF:000011">
    <property type="entry name" value="Chromosome 7, whole genome shotgun sequence"/>
    <property type="match status" value="1"/>
</dbReference>
<dbReference type="Gene3D" id="2.30.110.10">
    <property type="entry name" value="Electron Transport, Fmn-binding Protein, Chain A"/>
    <property type="match status" value="1"/>
</dbReference>
<dbReference type="HAMAP" id="MF_01629">
    <property type="entry name" value="PdxH"/>
    <property type="match status" value="1"/>
</dbReference>
<dbReference type="InterPro" id="IPR000659">
    <property type="entry name" value="Pyridox_Oxase"/>
</dbReference>
<dbReference type="InterPro" id="IPR019740">
    <property type="entry name" value="Pyridox_Oxase_CS"/>
</dbReference>
<dbReference type="InterPro" id="IPR011576">
    <property type="entry name" value="Pyridox_Oxase_N"/>
</dbReference>
<dbReference type="InterPro" id="IPR019576">
    <property type="entry name" value="Pyridoxamine_oxidase_dimer_C"/>
</dbReference>
<dbReference type="InterPro" id="IPR012349">
    <property type="entry name" value="Split_barrel_FMN-bd"/>
</dbReference>
<dbReference type="NCBIfam" id="TIGR00558">
    <property type="entry name" value="pdxH"/>
    <property type="match status" value="1"/>
</dbReference>
<dbReference type="NCBIfam" id="NF004231">
    <property type="entry name" value="PRK05679.1"/>
    <property type="match status" value="1"/>
</dbReference>
<dbReference type="PANTHER" id="PTHR10851:SF0">
    <property type="entry name" value="PYRIDOXINE-5'-PHOSPHATE OXIDASE"/>
    <property type="match status" value="1"/>
</dbReference>
<dbReference type="PANTHER" id="PTHR10851">
    <property type="entry name" value="PYRIDOXINE-5-PHOSPHATE OXIDASE"/>
    <property type="match status" value="1"/>
</dbReference>
<dbReference type="Pfam" id="PF10590">
    <property type="entry name" value="PNP_phzG_C"/>
    <property type="match status" value="1"/>
</dbReference>
<dbReference type="Pfam" id="PF01243">
    <property type="entry name" value="PNPOx_N"/>
    <property type="match status" value="1"/>
</dbReference>
<dbReference type="PIRSF" id="PIRSF000190">
    <property type="entry name" value="Pyd_amn-ph_oxd"/>
    <property type="match status" value="1"/>
</dbReference>
<dbReference type="SUPFAM" id="SSF50475">
    <property type="entry name" value="FMN-binding split barrel"/>
    <property type="match status" value="1"/>
</dbReference>
<dbReference type="PROSITE" id="PS01064">
    <property type="entry name" value="PYRIDOX_OXIDASE"/>
    <property type="match status" value="1"/>
</dbReference>
<name>PDXH_PSEPW</name>
<comment type="function">
    <text evidence="1">Catalyzes the oxidation of either pyridoxine 5'-phosphate (PNP) or pyridoxamine 5'-phosphate (PMP) into pyridoxal 5'-phosphate (PLP).</text>
</comment>
<comment type="catalytic activity">
    <reaction evidence="1">
        <text>pyridoxamine 5'-phosphate + O2 + H2O = pyridoxal 5'-phosphate + H2O2 + NH4(+)</text>
        <dbReference type="Rhea" id="RHEA:15817"/>
        <dbReference type="ChEBI" id="CHEBI:15377"/>
        <dbReference type="ChEBI" id="CHEBI:15379"/>
        <dbReference type="ChEBI" id="CHEBI:16240"/>
        <dbReference type="ChEBI" id="CHEBI:28938"/>
        <dbReference type="ChEBI" id="CHEBI:58451"/>
        <dbReference type="ChEBI" id="CHEBI:597326"/>
        <dbReference type="EC" id="1.4.3.5"/>
    </reaction>
</comment>
<comment type="catalytic activity">
    <reaction evidence="1">
        <text>pyridoxine 5'-phosphate + O2 = pyridoxal 5'-phosphate + H2O2</text>
        <dbReference type="Rhea" id="RHEA:15149"/>
        <dbReference type="ChEBI" id="CHEBI:15379"/>
        <dbReference type="ChEBI" id="CHEBI:16240"/>
        <dbReference type="ChEBI" id="CHEBI:58589"/>
        <dbReference type="ChEBI" id="CHEBI:597326"/>
        <dbReference type="EC" id="1.4.3.5"/>
    </reaction>
</comment>
<comment type="cofactor">
    <cofactor evidence="1">
        <name>FMN</name>
        <dbReference type="ChEBI" id="CHEBI:58210"/>
    </cofactor>
    <text evidence="1">Binds 1 FMN per subunit.</text>
</comment>
<comment type="pathway">
    <text evidence="1">Cofactor metabolism; pyridoxal 5'-phosphate salvage; pyridoxal 5'-phosphate from pyridoxamine 5'-phosphate: step 1/1.</text>
</comment>
<comment type="pathway">
    <text evidence="1">Cofactor metabolism; pyridoxal 5'-phosphate salvage; pyridoxal 5'-phosphate from pyridoxine 5'-phosphate: step 1/1.</text>
</comment>
<comment type="subunit">
    <text evidence="1">Homodimer.</text>
</comment>
<comment type="similarity">
    <text evidence="1">Belongs to the pyridoxamine 5'-phosphate oxidase family.</text>
</comment>
<gene>
    <name evidence="1" type="primary">pdxH</name>
    <name type="ordered locus">PputW619_1150</name>
</gene>
<evidence type="ECO:0000255" key="1">
    <source>
        <dbReference type="HAMAP-Rule" id="MF_01629"/>
    </source>
</evidence>
<sequence length="215" mass="24625">MTQSLADMRRDYTRDGLAEAQAPGEPFALFHQWFADAVKTEQPPVEANAMTLATVDGDGRPHCRVLLLKGLDDRGFTFFTNYDSAKGQQLQANPYAAMTFFWPALERQVRIEGRVEKVTPQESDDYYQVRPLGSRLGAWASPQSRVIASREALEGLVKATEARFSDTQPHCPEHWGGYRLLPERIEFWQGRASRLHDRLNYRWVDGQWARERLAP</sequence>
<accession>B1J1C4</accession>
<proteinExistence type="inferred from homology"/>
<protein>
    <recommendedName>
        <fullName evidence="1">Pyridoxine/pyridoxamine 5'-phosphate oxidase</fullName>
        <ecNumber evidence="1">1.4.3.5</ecNumber>
    </recommendedName>
    <alternativeName>
        <fullName evidence="1">PNP/PMP oxidase</fullName>
        <shortName evidence="1">PNPOx</shortName>
    </alternativeName>
    <alternativeName>
        <fullName evidence="1">Pyridoxal 5'-phosphate synthase</fullName>
    </alternativeName>
</protein>
<keyword id="KW-0285">Flavoprotein</keyword>
<keyword id="KW-0288">FMN</keyword>
<keyword id="KW-0560">Oxidoreductase</keyword>
<keyword id="KW-0664">Pyridoxine biosynthesis</keyword>